<accession>Q2T269</accession>
<protein>
    <recommendedName>
        <fullName evidence="1">Diaminopimelate epimerase</fullName>
        <shortName evidence="1">DAP epimerase</shortName>
        <ecNumber evidence="1">5.1.1.7</ecNumber>
    </recommendedName>
    <alternativeName>
        <fullName evidence="1">PLP-independent amino acid racemase</fullName>
    </alternativeName>
</protein>
<proteinExistence type="inferred from homology"/>
<comment type="function">
    <text evidence="1">Catalyzes the stereoinversion of LL-2,6-diaminopimelate (L,L-DAP) to meso-diaminopimelate (meso-DAP), a precursor of L-lysine and an essential component of the bacterial peptidoglycan.</text>
</comment>
<comment type="catalytic activity">
    <reaction evidence="1">
        <text>(2S,6S)-2,6-diaminopimelate = meso-2,6-diaminopimelate</text>
        <dbReference type="Rhea" id="RHEA:15393"/>
        <dbReference type="ChEBI" id="CHEBI:57609"/>
        <dbReference type="ChEBI" id="CHEBI:57791"/>
        <dbReference type="EC" id="5.1.1.7"/>
    </reaction>
</comment>
<comment type="pathway">
    <text evidence="1">Amino-acid biosynthesis; L-lysine biosynthesis via DAP pathway; DL-2,6-diaminopimelate from LL-2,6-diaminopimelate: step 1/1.</text>
</comment>
<comment type="subunit">
    <text evidence="1">Homodimer.</text>
</comment>
<comment type="subcellular location">
    <subcellularLocation>
        <location evidence="1">Cytoplasm</location>
    </subcellularLocation>
</comment>
<comment type="similarity">
    <text evidence="1">Belongs to the diaminopimelate epimerase family.</text>
</comment>
<gene>
    <name evidence="1" type="primary">dapF</name>
    <name type="ordered locus">BTH_I0172</name>
</gene>
<keyword id="KW-0028">Amino-acid biosynthesis</keyword>
<keyword id="KW-0963">Cytoplasm</keyword>
<keyword id="KW-0413">Isomerase</keyword>
<keyword id="KW-0457">Lysine biosynthesis</keyword>
<sequence length="289" mass="30969">MKLSFTKMHGAGNDFVVLDGYSRALPPLTDALVRALADRHFGIGADQLLLVEKPTVDGADFKYRIFNCDGGEVEHCGNGARCFVKFVRDHGLTDKASVRVEVKHGVITLTMQDNGEVVVDMGAPVFEPARVPFDTSGLDGRREGADTLWPLPVNGATRWISVVSMGNPHAVQIVDDAEAFPVLADGPAIERDPRFPQRVNAGFMQIVSRHEVKLRVYERGAGETLACGTGACAAVAAGIRRGQLDSPVTVHTHGGTLTISWDGARDERAPLMMAGPATTVFEGVIDLPA</sequence>
<organism>
    <name type="scientific">Burkholderia thailandensis (strain ATCC 700388 / DSM 13276 / CCUG 48851 / CIP 106301 / E264)</name>
    <dbReference type="NCBI Taxonomy" id="271848"/>
    <lineage>
        <taxon>Bacteria</taxon>
        <taxon>Pseudomonadati</taxon>
        <taxon>Pseudomonadota</taxon>
        <taxon>Betaproteobacteria</taxon>
        <taxon>Burkholderiales</taxon>
        <taxon>Burkholderiaceae</taxon>
        <taxon>Burkholderia</taxon>
        <taxon>pseudomallei group</taxon>
    </lineage>
</organism>
<reference key="1">
    <citation type="journal article" date="2005" name="BMC Genomics">
        <title>Bacterial genome adaptation to niches: divergence of the potential virulence genes in three Burkholderia species of different survival strategies.</title>
        <authorList>
            <person name="Kim H.S."/>
            <person name="Schell M.A."/>
            <person name="Yu Y."/>
            <person name="Ulrich R.L."/>
            <person name="Sarria S.H."/>
            <person name="Nierman W.C."/>
            <person name="DeShazer D."/>
        </authorList>
    </citation>
    <scope>NUCLEOTIDE SEQUENCE [LARGE SCALE GENOMIC DNA]</scope>
    <source>
        <strain>ATCC 700388 / DSM 13276 / CCUG 48851 / CIP 106301 / E264</strain>
    </source>
</reference>
<name>DAPF_BURTA</name>
<evidence type="ECO:0000255" key="1">
    <source>
        <dbReference type="HAMAP-Rule" id="MF_00197"/>
    </source>
</evidence>
<feature type="chain" id="PRO_1000011861" description="Diaminopimelate epimerase">
    <location>
        <begin position="1"/>
        <end position="289"/>
    </location>
</feature>
<feature type="active site" description="Proton donor" evidence="1">
    <location>
        <position position="76"/>
    </location>
</feature>
<feature type="active site" description="Proton acceptor" evidence="1">
    <location>
        <position position="227"/>
    </location>
</feature>
<feature type="binding site" evidence="1">
    <location>
        <position position="13"/>
    </location>
    <ligand>
        <name>substrate</name>
    </ligand>
</feature>
<feature type="binding site" evidence="1">
    <location>
        <position position="47"/>
    </location>
    <ligand>
        <name>substrate</name>
    </ligand>
</feature>
<feature type="binding site" evidence="1">
    <location>
        <position position="67"/>
    </location>
    <ligand>
        <name>substrate</name>
    </ligand>
</feature>
<feature type="binding site" evidence="1">
    <location>
        <begin position="77"/>
        <end position="78"/>
    </location>
    <ligand>
        <name>substrate</name>
    </ligand>
</feature>
<feature type="binding site" evidence="1">
    <location>
        <position position="167"/>
    </location>
    <ligand>
        <name>substrate</name>
    </ligand>
</feature>
<feature type="binding site" evidence="1">
    <location>
        <position position="200"/>
    </location>
    <ligand>
        <name>substrate</name>
    </ligand>
</feature>
<feature type="binding site" evidence="1">
    <location>
        <begin position="218"/>
        <end position="219"/>
    </location>
    <ligand>
        <name>substrate</name>
    </ligand>
</feature>
<feature type="binding site" evidence="1">
    <location>
        <begin position="228"/>
        <end position="229"/>
    </location>
    <ligand>
        <name>substrate</name>
    </ligand>
</feature>
<feature type="site" description="Could be important to modulate the pK values of the two catalytic cysteine residues" evidence="1">
    <location>
        <position position="169"/>
    </location>
</feature>
<feature type="site" description="Could be important to modulate the pK values of the two catalytic cysteine residues" evidence="1">
    <location>
        <position position="218"/>
    </location>
</feature>
<dbReference type="EC" id="5.1.1.7" evidence="1"/>
<dbReference type="EMBL" id="CP000086">
    <property type="protein sequence ID" value="ABC37078.1"/>
    <property type="molecule type" value="Genomic_DNA"/>
</dbReference>
<dbReference type="RefSeq" id="WP_009893552.1">
    <property type="nucleotide sequence ID" value="NZ_CP008785.1"/>
</dbReference>
<dbReference type="SMR" id="Q2T269"/>
<dbReference type="GeneID" id="45119943"/>
<dbReference type="KEGG" id="bte:BTH_I0172"/>
<dbReference type="HOGENOM" id="CLU_053306_1_1_4"/>
<dbReference type="UniPathway" id="UPA00034">
    <property type="reaction ID" value="UER00025"/>
</dbReference>
<dbReference type="Proteomes" id="UP000001930">
    <property type="component" value="Chromosome I"/>
</dbReference>
<dbReference type="GO" id="GO:0005829">
    <property type="term" value="C:cytosol"/>
    <property type="evidence" value="ECO:0007669"/>
    <property type="project" value="TreeGrafter"/>
</dbReference>
<dbReference type="GO" id="GO:0008837">
    <property type="term" value="F:diaminopimelate epimerase activity"/>
    <property type="evidence" value="ECO:0007669"/>
    <property type="project" value="UniProtKB-UniRule"/>
</dbReference>
<dbReference type="GO" id="GO:0009089">
    <property type="term" value="P:lysine biosynthetic process via diaminopimelate"/>
    <property type="evidence" value="ECO:0007669"/>
    <property type="project" value="UniProtKB-UniRule"/>
</dbReference>
<dbReference type="FunFam" id="3.10.310.10:FF:000001">
    <property type="entry name" value="Diaminopimelate epimerase"/>
    <property type="match status" value="1"/>
</dbReference>
<dbReference type="Gene3D" id="3.10.310.10">
    <property type="entry name" value="Diaminopimelate Epimerase, Chain A, domain 1"/>
    <property type="match status" value="2"/>
</dbReference>
<dbReference type="HAMAP" id="MF_00197">
    <property type="entry name" value="DAP_epimerase"/>
    <property type="match status" value="1"/>
</dbReference>
<dbReference type="InterPro" id="IPR018510">
    <property type="entry name" value="DAP_epimerase_AS"/>
</dbReference>
<dbReference type="InterPro" id="IPR001653">
    <property type="entry name" value="DAP_epimerase_DapF"/>
</dbReference>
<dbReference type="NCBIfam" id="TIGR00652">
    <property type="entry name" value="DapF"/>
    <property type="match status" value="1"/>
</dbReference>
<dbReference type="PANTHER" id="PTHR31689:SF0">
    <property type="entry name" value="DIAMINOPIMELATE EPIMERASE"/>
    <property type="match status" value="1"/>
</dbReference>
<dbReference type="PANTHER" id="PTHR31689">
    <property type="entry name" value="DIAMINOPIMELATE EPIMERASE, CHLOROPLASTIC"/>
    <property type="match status" value="1"/>
</dbReference>
<dbReference type="Pfam" id="PF01678">
    <property type="entry name" value="DAP_epimerase"/>
    <property type="match status" value="2"/>
</dbReference>
<dbReference type="SUPFAM" id="SSF54506">
    <property type="entry name" value="Diaminopimelate epimerase-like"/>
    <property type="match status" value="1"/>
</dbReference>
<dbReference type="PROSITE" id="PS01326">
    <property type="entry name" value="DAP_EPIMERASE"/>
    <property type="match status" value="1"/>
</dbReference>